<dbReference type="EMBL" id="AC010336">
    <property type="status" value="NOT_ANNOTATED_CDS"/>
    <property type="molecule type" value="Genomic_DNA"/>
</dbReference>
<dbReference type="EMBL" id="KF459711">
    <property type="status" value="NOT_ANNOTATED_CDS"/>
    <property type="molecule type" value="Genomic_DNA"/>
</dbReference>
<dbReference type="EMBL" id="AK025837">
    <property type="protein sequence ID" value="BAB15254.1"/>
    <property type="status" value="ALT_INIT"/>
    <property type="molecule type" value="mRNA"/>
</dbReference>
<dbReference type="EMBL" id="AL442075">
    <property type="protein sequence ID" value="CAC09441.1"/>
    <property type="molecule type" value="mRNA"/>
</dbReference>
<dbReference type="CCDS" id="CCDS74276.1">
    <molecule id="Q9H6K5-1"/>
</dbReference>
<dbReference type="RefSeq" id="NP_001177396.1">
    <molecule id="Q9H6K5-1"/>
    <property type="nucleotide sequence ID" value="NM_001190467.2"/>
</dbReference>
<dbReference type="FunCoup" id="Q9H6K5">
    <property type="interactions" value="95"/>
</dbReference>
<dbReference type="IntAct" id="Q9H6K5">
    <property type="interactions" value="6"/>
</dbReference>
<dbReference type="MINT" id="Q9H6K5"/>
<dbReference type="STRING" id="9606.ENSP00000482374"/>
<dbReference type="GlyGen" id="Q9H6K5">
    <property type="glycosylation" value="18 sites, 1 O-linked glycan (1 site)"/>
</dbReference>
<dbReference type="iPTMnet" id="Q9H6K5"/>
<dbReference type="PhosphoSitePlus" id="Q9H6K5"/>
<dbReference type="BioMuta" id="PRR36"/>
<dbReference type="DMDM" id="74718524"/>
<dbReference type="jPOST" id="Q9H6K5"/>
<dbReference type="MassIVE" id="Q9H6K5"/>
<dbReference type="PaxDb" id="9606-ENSP00000482374"/>
<dbReference type="PeptideAtlas" id="Q9H6K5"/>
<dbReference type="Pumba" id="Q9H6K5"/>
<dbReference type="Antibodypedia" id="70670">
    <property type="antibodies" value="3 antibodies from 3 providers"/>
</dbReference>
<dbReference type="Ensembl" id="ENST00000618550.5">
    <molecule id="Q9H6K5-1"/>
    <property type="protein sequence ID" value="ENSP00000482374.1"/>
    <property type="gene ID" value="ENSG00000183248.12"/>
</dbReference>
<dbReference type="GeneID" id="80164"/>
<dbReference type="KEGG" id="hsa:80164"/>
<dbReference type="MANE-Select" id="ENST00000618550.5">
    <property type="protein sequence ID" value="ENSP00000482374.1"/>
    <property type="RefSeq nucleotide sequence ID" value="NM_001190467.2"/>
    <property type="RefSeq protein sequence ID" value="NP_001177396.1"/>
</dbReference>
<dbReference type="UCSC" id="uc032hlq.2">
    <property type="organism name" value="human"/>
</dbReference>
<dbReference type="AGR" id="HGNC:26172"/>
<dbReference type="CTD" id="80164"/>
<dbReference type="GeneCards" id="PRR36"/>
<dbReference type="HGNC" id="HGNC:26172">
    <property type="gene designation" value="PRR36"/>
</dbReference>
<dbReference type="HPA" id="ENSG00000183248">
    <property type="expression patterns" value="Group enriched (brain, pituitary gland)"/>
</dbReference>
<dbReference type="neXtProt" id="NX_Q9H6K5"/>
<dbReference type="OpenTargets" id="ENSG00000183248"/>
<dbReference type="VEuPathDB" id="HostDB:ENSG00000183248"/>
<dbReference type="eggNOG" id="ENOG502S4AG">
    <property type="taxonomic scope" value="Eukaryota"/>
</dbReference>
<dbReference type="GeneTree" id="ENSGT00940000154382"/>
<dbReference type="HOGENOM" id="CLU_286361_0_0_1"/>
<dbReference type="InParanoid" id="Q9H6K5"/>
<dbReference type="OMA" id="CTIYETE"/>
<dbReference type="OrthoDB" id="9486435at2759"/>
<dbReference type="PAN-GO" id="Q9H6K5">
    <property type="GO annotations" value="0 GO annotations based on evolutionary models"/>
</dbReference>
<dbReference type="PathwayCommons" id="Q9H6K5"/>
<dbReference type="SignaLink" id="Q9H6K5"/>
<dbReference type="BioGRID-ORCS" id="80164">
    <property type="hits" value="2 hits in 162 CRISPR screens"/>
</dbReference>
<dbReference type="ChiTaRS" id="PRR36">
    <property type="organism name" value="human"/>
</dbReference>
<dbReference type="GenomeRNAi" id="80164"/>
<dbReference type="Pharos" id="Q9H6K5">
    <property type="development level" value="Tdark"/>
</dbReference>
<dbReference type="PRO" id="PR:Q9H6K5"/>
<dbReference type="Proteomes" id="UP000005640">
    <property type="component" value="Chromosome 19"/>
</dbReference>
<dbReference type="RNAct" id="Q9H6K5">
    <property type="molecule type" value="protein"/>
</dbReference>
<dbReference type="Bgee" id="ENSG00000183248">
    <property type="expression patterns" value="Expressed in cortical plate and 93 other cell types or tissues"/>
</dbReference>
<dbReference type="ExpressionAtlas" id="Q9H6K5">
    <property type="expression patterns" value="baseline and differential"/>
</dbReference>
<dbReference type="InterPro" id="IPR027907">
    <property type="entry name" value="BTBD8_C"/>
</dbReference>
<dbReference type="PANTHER" id="PTHR22427">
    <property type="entry name" value="GH15728P"/>
    <property type="match status" value="1"/>
</dbReference>
<dbReference type="PANTHER" id="PTHR22427:SF8">
    <property type="entry name" value="PROLINE-RICH PROTEIN 36"/>
    <property type="match status" value="1"/>
</dbReference>
<dbReference type="Pfam" id="PF15363">
    <property type="entry name" value="BTBD8_C"/>
    <property type="match status" value="1"/>
</dbReference>
<feature type="chain" id="PRO_0000329437" description="Proline-rich protein 36">
    <location>
        <begin position="1"/>
        <end position="1346"/>
    </location>
</feature>
<feature type="region of interest" description="Disordered" evidence="1">
    <location>
        <begin position="1"/>
        <end position="403"/>
    </location>
</feature>
<feature type="region of interest" description="Disordered" evidence="1">
    <location>
        <begin position="426"/>
        <end position="512"/>
    </location>
</feature>
<feature type="region of interest" description="Disordered" evidence="1">
    <location>
        <begin position="537"/>
        <end position="606"/>
    </location>
</feature>
<feature type="region of interest" description="Disordered" evidence="1">
    <location>
        <begin position="633"/>
        <end position="679"/>
    </location>
</feature>
<feature type="region of interest" description="Disordered" evidence="1">
    <location>
        <begin position="711"/>
        <end position="1155"/>
    </location>
</feature>
<feature type="region of interest" description="Disordered" evidence="1">
    <location>
        <begin position="1168"/>
        <end position="1240"/>
    </location>
</feature>
<feature type="compositionally biased region" description="Low complexity" evidence="1">
    <location>
        <begin position="10"/>
        <end position="26"/>
    </location>
</feature>
<feature type="compositionally biased region" description="Pro residues" evidence="1">
    <location>
        <begin position="27"/>
        <end position="40"/>
    </location>
</feature>
<feature type="compositionally biased region" description="Low complexity" evidence="1">
    <location>
        <begin position="41"/>
        <end position="55"/>
    </location>
</feature>
<feature type="compositionally biased region" description="Low complexity" evidence="1">
    <location>
        <begin position="86"/>
        <end position="97"/>
    </location>
</feature>
<feature type="compositionally biased region" description="Basic and acidic residues" evidence="1">
    <location>
        <begin position="137"/>
        <end position="152"/>
    </location>
</feature>
<feature type="compositionally biased region" description="Low complexity" evidence="1">
    <location>
        <begin position="165"/>
        <end position="177"/>
    </location>
</feature>
<feature type="compositionally biased region" description="Pro residues" evidence="1">
    <location>
        <begin position="191"/>
        <end position="203"/>
    </location>
</feature>
<feature type="compositionally biased region" description="Polar residues" evidence="1">
    <location>
        <begin position="208"/>
        <end position="220"/>
    </location>
</feature>
<feature type="compositionally biased region" description="Low complexity" evidence="1">
    <location>
        <begin position="235"/>
        <end position="255"/>
    </location>
</feature>
<feature type="compositionally biased region" description="Low complexity" evidence="1">
    <location>
        <begin position="293"/>
        <end position="312"/>
    </location>
</feature>
<feature type="compositionally biased region" description="Pro residues" evidence="1">
    <location>
        <begin position="329"/>
        <end position="343"/>
    </location>
</feature>
<feature type="compositionally biased region" description="Pro residues" evidence="1">
    <location>
        <begin position="371"/>
        <end position="380"/>
    </location>
</feature>
<feature type="compositionally biased region" description="Pro residues" evidence="1">
    <location>
        <begin position="387"/>
        <end position="397"/>
    </location>
</feature>
<feature type="compositionally biased region" description="Low complexity" evidence="1">
    <location>
        <begin position="426"/>
        <end position="464"/>
    </location>
</feature>
<feature type="compositionally biased region" description="Pro residues" evidence="1">
    <location>
        <begin position="494"/>
        <end position="506"/>
    </location>
</feature>
<feature type="compositionally biased region" description="Low complexity" evidence="1">
    <location>
        <begin position="546"/>
        <end position="558"/>
    </location>
</feature>
<feature type="compositionally biased region" description="Pro residues" evidence="1">
    <location>
        <begin position="559"/>
        <end position="578"/>
    </location>
</feature>
<feature type="compositionally biased region" description="Polar residues" evidence="1">
    <location>
        <begin position="633"/>
        <end position="647"/>
    </location>
</feature>
<feature type="compositionally biased region" description="Pro residues" evidence="1">
    <location>
        <begin position="648"/>
        <end position="657"/>
    </location>
</feature>
<feature type="compositionally biased region" description="Low complexity" evidence="1">
    <location>
        <begin position="658"/>
        <end position="679"/>
    </location>
</feature>
<feature type="compositionally biased region" description="Polar residues" evidence="1">
    <location>
        <begin position="724"/>
        <end position="733"/>
    </location>
</feature>
<feature type="compositionally biased region" description="Pro residues" evidence="1">
    <location>
        <begin position="781"/>
        <end position="821"/>
    </location>
</feature>
<feature type="compositionally biased region" description="Pro residues" evidence="1">
    <location>
        <begin position="829"/>
        <end position="865"/>
    </location>
</feature>
<feature type="compositionally biased region" description="Low complexity" evidence="1">
    <location>
        <begin position="866"/>
        <end position="875"/>
    </location>
</feature>
<feature type="compositionally biased region" description="Pro residues" evidence="1">
    <location>
        <begin position="887"/>
        <end position="917"/>
    </location>
</feature>
<feature type="compositionally biased region" description="Pro residues" evidence="1">
    <location>
        <begin position="926"/>
        <end position="997"/>
    </location>
</feature>
<feature type="compositionally biased region" description="Pro residues" evidence="1">
    <location>
        <begin position="1004"/>
        <end position="1015"/>
    </location>
</feature>
<feature type="compositionally biased region" description="Low complexity" evidence="1">
    <location>
        <begin position="1029"/>
        <end position="1046"/>
    </location>
</feature>
<feature type="compositionally biased region" description="Low complexity" evidence="1">
    <location>
        <begin position="1137"/>
        <end position="1146"/>
    </location>
</feature>
<feature type="compositionally biased region" description="Low complexity" evidence="1">
    <location>
        <begin position="1224"/>
        <end position="1239"/>
    </location>
</feature>
<feature type="modified residue" description="Phosphoserine" evidence="4 5">
    <location>
        <position position="1310"/>
    </location>
</feature>
<feature type="splice variant" id="VSP_057467" description="In isoform 2." evidence="2">
    <location>
        <begin position="729"/>
        <end position="751"/>
    </location>
</feature>
<feature type="sequence conflict" description="In Ref. 2; BAB15254." evidence="2" ref="2">
    <original>L</original>
    <variation>P</variation>
    <location>
        <position position="1170"/>
    </location>
</feature>
<comment type="alternative products">
    <event type="alternative splicing"/>
    <isoform>
        <id>Q9H6K5-1</id>
        <name>1</name>
        <sequence type="displayed"/>
    </isoform>
    <isoform>
        <id>Q9H6K5-2</id>
        <name>2</name>
        <sequence type="described" ref="VSP_057467"/>
    </isoform>
</comment>
<comment type="sequence caution" evidence="2">
    <conflict type="erroneous initiation">
        <sequence resource="EMBL-CDS" id="BAB15254"/>
    </conflict>
    <text>Truncated N-terminus.</text>
</comment>
<reference key="1">
    <citation type="journal article" date="2004" name="Nature">
        <title>The DNA sequence and biology of human chromosome 19.</title>
        <authorList>
            <person name="Grimwood J."/>
            <person name="Gordon L.A."/>
            <person name="Olsen A.S."/>
            <person name="Terry A."/>
            <person name="Schmutz J."/>
            <person name="Lamerdin J.E."/>
            <person name="Hellsten U."/>
            <person name="Goodstein D."/>
            <person name="Couronne O."/>
            <person name="Tran-Gyamfi M."/>
            <person name="Aerts A."/>
            <person name="Altherr M."/>
            <person name="Ashworth L."/>
            <person name="Bajorek E."/>
            <person name="Black S."/>
            <person name="Branscomb E."/>
            <person name="Caenepeel S."/>
            <person name="Carrano A.V."/>
            <person name="Caoile C."/>
            <person name="Chan Y.M."/>
            <person name="Christensen M."/>
            <person name="Cleland C.A."/>
            <person name="Copeland A."/>
            <person name="Dalin E."/>
            <person name="Dehal P."/>
            <person name="Denys M."/>
            <person name="Detter J.C."/>
            <person name="Escobar J."/>
            <person name="Flowers D."/>
            <person name="Fotopulos D."/>
            <person name="Garcia C."/>
            <person name="Georgescu A.M."/>
            <person name="Glavina T."/>
            <person name="Gomez M."/>
            <person name="Gonzales E."/>
            <person name="Groza M."/>
            <person name="Hammon N."/>
            <person name="Hawkins T."/>
            <person name="Haydu L."/>
            <person name="Ho I."/>
            <person name="Huang W."/>
            <person name="Israni S."/>
            <person name="Jett J."/>
            <person name="Kadner K."/>
            <person name="Kimball H."/>
            <person name="Kobayashi A."/>
            <person name="Larionov V."/>
            <person name="Leem S.-H."/>
            <person name="Lopez F."/>
            <person name="Lou Y."/>
            <person name="Lowry S."/>
            <person name="Malfatti S."/>
            <person name="Martinez D."/>
            <person name="McCready P.M."/>
            <person name="Medina C."/>
            <person name="Morgan J."/>
            <person name="Nelson K."/>
            <person name="Nolan M."/>
            <person name="Ovcharenko I."/>
            <person name="Pitluck S."/>
            <person name="Pollard M."/>
            <person name="Popkie A.P."/>
            <person name="Predki P."/>
            <person name="Quan G."/>
            <person name="Ramirez L."/>
            <person name="Rash S."/>
            <person name="Retterer J."/>
            <person name="Rodriguez A."/>
            <person name="Rogers S."/>
            <person name="Salamov A."/>
            <person name="Salazar A."/>
            <person name="She X."/>
            <person name="Smith D."/>
            <person name="Slezak T."/>
            <person name="Solovyev V."/>
            <person name="Thayer N."/>
            <person name="Tice H."/>
            <person name="Tsai M."/>
            <person name="Ustaszewska A."/>
            <person name="Vo N."/>
            <person name="Wagner M."/>
            <person name="Wheeler J."/>
            <person name="Wu K."/>
            <person name="Xie G."/>
            <person name="Yang J."/>
            <person name="Dubchak I."/>
            <person name="Furey T.S."/>
            <person name="DeJong P."/>
            <person name="Dickson M."/>
            <person name="Gordon D."/>
            <person name="Eichler E.E."/>
            <person name="Pennacchio L.A."/>
            <person name="Richardson P."/>
            <person name="Stubbs L."/>
            <person name="Rokhsar D.S."/>
            <person name="Myers R.M."/>
            <person name="Rubin E.M."/>
            <person name="Lucas S.M."/>
        </authorList>
    </citation>
    <scope>NUCLEOTIDE SEQUENCE [LARGE SCALE GENOMIC DNA]</scope>
</reference>
<reference key="2">
    <citation type="journal article" date="2004" name="Nat. Genet.">
        <title>Complete sequencing and characterization of 21,243 full-length human cDNAs.</title>
        <authorList>
            <person name="Ota T."/>
            <person name="Suzuki Y."/>
            <person name="Nishikawa T."/>
            <person name="Otsuki T."/>
            <person name="Sugiyama T."/>
            <person name="Irie R."/>
            <person name="Wakamatsu A."/>
            <person name="Hayashi K."/>
            <person name="Sato H."/>
            <person name="Nagai K."/>
            <person name="Kimura K."/>
            <person name="Makita H."/>
            <person name="Sekine M."/>
            <person name="Obayashi M."/>
            <person name="Nishi T."/>
            <person name="Shibahara T."/>
            <person name="Tanaka T."/>
            <person name="Ishii S."/>
            <person name="Yamamoto J."/>
            <person name="Saito K."/>
            <person name="Kawai Y."/>
            <person name="Isono Y."/>
            <person name="Nakamura Y."/>
            <person name="Nagahari K."/>
            <person name="Murakami K."/>
            <person name="Yasuda T."/>
            <person name="Iwayanagi T."/>
            <person name="Wagatsuma M."/>
            <person name="Shiratori A."/>
            <person name="Sudo H."/>
            <person name="Hosoiri T."/>
            <person name="Kaku Y."/>
            <person name="Kodaira H."/>
            <person name="Kondo H."/>
            <person name="Sugawara M."/>
            <person name="Takahashi M."/>
            <person name="Kanda K."/>
            <person name="Yokoi T."/>
            <person name="Furuya T."/>
            <person name="Kikkawa E."/>
            <person name="Omura Y."/>
            <person name="Abe K."/>
            <person name="Kamihara K."/>
            <person name="Katsuta N."/>
            <person name="Sato K."/>
            <person name="Tanikawa M."/>
            <person name="Yamazaki M."/>
            <person name="Ninomiya K."/>
            <person name="Ishibashi T."/>
            <person name="Yamashita H."/>
            <person name="Murakawa K."/>
            <person name="Fujimori K."/>
            <person name="Tanai H."/>
            <person name="Kimata M."/>
            <person name="Watanabe M."/>
            <person name="Hiraoka S."/>
            <person name="Chiba Y."/>
            <person name="Ishida S."/>
            <person name="Ono Y."/>
            <person name="Takiguchi S."/>
            <person name="Watanabe S."/>
            <person name="Yosida M."/>
            <person name="Hotuta T."/>
            <person name="Kusano J."/>
            <person name="Kanehori K."/>
            <person name="Takahashi-Fujii A."/>
            <person name="Hara H."/>
            <person name="Tanase T.-O."/>
            <person name="Nomura Y."/>
            <person name="Togiya S."/>
            <person name="Komai F."/>
            <person name="Hara R."/>
            <person name="Takeuchi K."/>
            <person name="Arita M."/>
            <person name="Imose N."/>
            <person name="Musashino K."/>
            <person name="Yuuki H."/>
            <person name="Oshima A."/>
            <person name="Sasaki N."/>
            <person name="Aotsuka S."/>
            <person name="Yoshikawa Y."/>
            <person name="Matsunawa H."/>
            <person name="Ichihara T."/>
            <person name="Shiohata N."/>
            <person name="Sano S."/>
            <person name="Moriya S."/>
            <person name="Momiyama H."/>
            <person name="Satoh N."/>
            <person name="Takami S."/>
            <person name="Terashima Y."/>
            <person name="Suzuki O."/>
            <person name="Nakagawa S."/>
            <person name="Senoh A."/>
            <person name="Mizoguchi H."/>
            <person name="Goto Y."/>
            <person name="Shimizu F."/>
            <person name="Wakebe H."/>
            <person name="Hishigaki H."/>
            <person name="Watanabe T."/>
            <person name="Sugiyama A."/>
            <person name="Takemoto M."/>
            <person name="Kawakami B."/>
            <person name="Yamazaki M."/>
            <person name="Watanabe K."/>
            <person name="Kumagai A."/>
            <person name="Itakura S."/>
            <person name="Fukuzumi Y."/>
            <person name="Fujimori Y."/>
            <person name="Komiyama M."/>
            <person name="Tashiro H."/>
            <person name="Tanigami A."/>
            <person name="Fujiwara T."/>
            <person name="Ono T."/>
            <person name="Yamada K."/>
            <person name="Fujii Y."/>
            <person name="Ozaki K."/>
            <person name="Hirao M."/>
            <person name="Ohmori Y."/>
            <person name="Kawabata A."/>
            <person name="Hikiji T."/>
            <person name="Kobatake N."/>
            <person name="Inagaki H."/>
            <person name="Ikema Y."/>
            <person name="Okamoto S."/>
            <person name="Okitani R."/>
            <person name="Kawakami T."/>
            <person name="Noguchi S."/>
            <person name="Itoh T."/>
            <person name="Shigeta K."/>
            <person name="Senba T."/>
            <person name="Matsumura K."/>
            <person name="Nakajima Y."/>
            <person name="Mizuno T."/>
            <person name="Morinaga M."/>
            <person name="Sasaki M."/>
            <person name="Togashi T."/>
            <person name="Oyama M."/>
            <person name="Hata H."/>
            <person name="Watanabe M."/>
            <person name="Komatsu T."/>
            <person name="Mizushima-Sugano J."/>
            <person name="Satoh T."/>
            <person name="Shirai Y."/>
            <person name="Takahashi Y."/>
            <person name="Nakagawa K."/>
            <person name="Okumura K."/>
            <person name="Nagase T."/>
            <person name="Nomura N."/>
            <person name="Kikuchi H."/>
            <person name="Masuho Y."/>
            <person name="Yamashita R."/>
            <person name="Nakai K."/>
            <person name="Yada T."/>
            <person name="Nakamura Y."/>
            <person name="Ohara O."/>
            <person name="Isogai T."/>
            <person name="Sugano S."/>
        </authorList>
    </citation>
    <scope>NUCLEOTIDE SEQUENCE [LARGE SCALE MRNA] OF 679-1346 (ISOFORM 2)</scope>
</reference>
<reference key="3">
    <citation type="journal article" date="2007" name="BMC Genomics">
        <title>The full-ORF clone resource of the German cDNA consortium.</title>
        <authorList>
            <person name="Bechtel S."/>
            <person name="Rosenfelder H."/>
            <person name="Duda A."/>
            <person name="Schmidt C.P."/>
            <person name="Ernst U."/>
            <person name="Wellenreuther R."/>
            <person name="Mehrle A."/>
            <person name="Schuster C."/>
            <person name="Bahr A."/>
            <person name="Bloecker H."/>
            <person name="Heubner D."/>
            <person name="Hoerlein A."/>
            <person name="Michel G."/>
            <person name="Wedler H."/>
            <person name="Koehrer K."/>
            <person name="Ottenwaelder B."/>
            <person name="Poustka A."/>
            <person name="Wiemann S."/>
            <person name="Schupp I."/>
        </authorList>
    </citation>
    <scope>NUCLEOTIDE SEQUENCE [LARGE SCALE MRNA] OF 1109-1346 (ISOFORMS 1/2)</scope>
    <source>
        <tissue>Amygdala</tissue>
    </source>
</reference>
<reference key="4">
    <citation type="journal article" date="2009" name="Sci. Signal.">
        <title>Quantitative phosphoproteomic analysis of T cell receptor signaling reveals system-wide modulation of protein-protein interactions.</title>
        <authorList>
            <person name="Mayya V."/>
            <person name="Lundgren D.H."/>
            <person name="Hwang S.-I."/>
            <person name="Rezaul K."/>
            <person name="Wu L."/>
            <person name="Eng J.K."/>
            <person name="Rodionov V."/>
            <person name="Han D.K."/>
        </authorList>
    </citation>
    <scope>PHOSPHORYLATION [LARGE SCALE ANALYSIS] AT SER-1310</scope>
    <scope>IDENTIFICATION BY MASS SPECTROMETRY [LARGE SCALE ANALYSIS]</scope>
    <source>
        <tissue>Leukemic T-cell</tissue>
    </source>
</reference>
<reference key="5">
    <citation type="journal article" date="2011" name="Sci. Signal.">
        <title>System-wide temporal characterization of the proteome and phosphoproteome of human embryonic stem cell differentiation.</title>
        <authorList>
            <person name="Rigbolt K.T."/>
            <person name="Prokhorova T.A."/>
            <person name="Akimov V."/>
            <person name="Henningsen J."/>
            <person name="Johansen P.T."/>
            <person name="Kratchmarova I."/>
            <person name="Kassem M."/>
            <person name="Mann M."/>
            <person name="Olsen J.V."/>
            <person name="Blagoev B."/>
        </authorList>
    </citation>
    <scope>PHOSPHORYLATION [LARGE SCALE ANALYSIS] AT SER-1310</scope>
    <scope>IDENTIFICATION BY MASS SPECTROMETRY [LARGE SCALE ANALYSIS]</scope>
</reference>
<organism>
    <name type="scientific">Homo sapiens</name>
    <name type="common">Human</name>
    <dbReference type="NCBI Taxonomy" id="9606"/>
    <lineage>
        <taxon>Eukaryota</taxon>
        <taxon>Metazoa</taxon>
        <taxon>Chordata</taxon>
        <taxon>Craniata</taxon>
        <taxon>Vertebrata</taxon>
        <taxon>Euteleostomi</taxon>
        <taxon>Mammalia</taxon>
        <taxon>Eutheria</taxon>
        <taxon>Euarchontoglires</taxon>
        <taxon>Primates</taxon>
        <taxon>Haplorrhini</taxon>
        <taxon>Catarrhini</taxon>
        <taxon>Hominidae</taxon>
        <taxon>Homo</taxon>
    </lineage>
</organism>
<proteinExistence type="evidence at protein level"/>
<evidence type="ECO:0000256" key="1">
    <source>
        <dbReference type="SAM" id="MobiDB-lite"/>
    </source>
</evidence>
<evidence type="ECO:0000305" key="2"/>
<evidence type="ECO:0000312" key="3">
    <source>
        <dbReference type="HGNC" id="HGNC:26172"/>
    </source>
</evidence>
<evidence type="ECO:0007744" key="4">
    <source>
    </source>
</evidence>
<evidence type="ECO:0007744" key="5">
    <source>
    </source>
</evidence>
<keyword id="KW-0025">Alternative splicing</keyword>
<keyword id="KW-0597">Phosphoprotein</keyword>
<keyword id="KW-1267">Proteomics identification</keyword>
<keyword id="KW-1185">Reference proteome</keyword>
<accession>Q9H6K5</accession>
<accession>A0A087WZ52</accession>
<accession>Q9H3X1</accession>
<name>PRR36_HUMAN</name>
<sequence length="1346" mass="132748">MDNKRDKAKAGAAARTPAARAPGLLTPRPPGSPRPPPPVTPAALRVLGAAGAVGRKPLAERAGGIGGATIPESAPRAGPTRSAGTSSRNPASRPPASGRGERAPPAKNTSPGPVSSPGRASGTTRPGPLGQKGLRISAEETVARGKATEAPKRSALSAGARRDTSGPTPGTPSPAMARRSRAAGTEVGLPRPAPSARPRPPTEGPRKSVSSASEHSTTEPSPAARRRPSAGGGLQRPASRSLSSSATPLSSPARSGPSARGTPRAPAHPSQPKPKGLQALRPPQVTPPRKDAAPALGPLSSSPLATPSPSGTKARPVPPPDNAATPLPATLPPSPPVTPPPPAALQSQAPPTLPATPHSSSLTCQLATPLPLAPPSPSAPPSLQTLPSPPATPPSQVPPTQLIMSFPEAGVSSLATAAFVASVSPSVSSPLQSMPPTQANPALPSLPTLLSPLATPPLSAMSPLQGPVSPATSLGNSAFPLAALPQPGLSALTTPPPQASPSPSPPSLQATPHTLATLPLQDSPLLATLPLQASPSPLTTVSLQDPPLVSPSLLASPPLQAPPHPQAPPSMTTPPMQAPPSLQTIPPIQVPHSLTSPSLQAPPSPLALSSLQATTSLGSPTLQATHSFLTMSPRQTQASLISPSRPASTPPDSPPLQAPLSLPASPPLQTSLSPAVSPLSSPLTIHPLQALSSLASHSPQAPLSSLIMPPLETQSSLAPPSLQTPPASLTTPPLENLPSLAPPPLQTASAPLTTPPLENLPSLAPPPLQTASAPLTTPHLETPPCPAPCPLQAPPSPLTTPPPETPSSIATPPPQAPPALASPPLQGLPSPPLSPLATPPPQAPPALALPPLQAPPSPPASPPLSPLATPSPQAPNALAVHLLQAPFSPPPSPPVQAPFSPPASPPVSPSATPPSQAPPSLAAPPLQVPPSPPASPPMSPSATPPPQAPPPLAAPPLQVPPSPPASPPMSPSATPPPRVPPLLAAPPLQVPPSPPASLPMSPLAKPPPQAPPALATPPLQALPSPPASFPGQAPFSPSASLPMSPLATPPPQAPPVLAAPLLQVPPSPPASPTLQAPRRPPTPGPDTSVSGPRLTLALAPGPPPPPSRSPSSTLSGPDLAGHSSSATSTPEELRGYDSGPEGGAAASPPPDAELAACHPAAWSRGPAPPLAFRGAPGAPLPWPPATGPGSADGLCTIYETEGPESATPAPGALDPGPSPGTSGGKAAAGAGAGASSRSPKQARLGELPLGALQASVVQHLLSRTLLLAAAEGAAGGSGGGPGGAEGGGVTGGARAALSDAELGRWAELLSPLDESRASITSVTSFSPDDVASPQGDWTVVEVETFH</sequence>
<gene>
    <name evidence="3" type="primary">PRR36</name>
</gene>
<protein>
    <recommendedName>
        <fullName evidence="3">Proline-rich protein 36</fullName>
    </recommendedName>
</protein>